<accession>Q21DG1</accession>
<protein>
    <recommendedName>
        <fullName evidence="1">tRNA modification GTPase MnmE</fullName>
        <ecNumber evidence="1">3.6.-.-</ecNumber>
    </recommendedName>
</protein>
<evidence type="ECO:0000255" key="1">
    <source>
        <dbReference type="HAMAP-Rule" id="MF_00379"/>
    </source>
</evidence>
<name>MNME_SACD2</name>
<reference key="1">
    <citation type="journal article" date="2008" name="PLoS Genet.">
        <title>Complete genome sequence of the complex carbohydrate-degrading marine bacterium, Saccharophagus degradans strain 2-40 T.</title>
        <authorList>
            <person name="Weiner R.M."/>
            <person name="Taylor L.E. II"/>
            <person name="Henrissat B."/>
            <person name="Hauser L."/>
            <person name="Land M."/>
            <person name="Coutinho P.M."/>
            <person name="Rancurel C."/>
            <person name="Saunders E.H."/>
            <person name="Longmire A.G."/>
            <person name="Zhang H."/>
            <person name="Bayer E.A."/>
            <person name="Gilbert H.J."/>
            <person name="Larimer F."/>
            <person name="Zhulin I.B."/>
            <person name="Ekborg N.A."/>
            <person name="Lamed R."/>
            <person name="Richardson P.M."/>
            <person name="Borovok I."/>
            <person name="Hutcheson S."/>
        </authorList>
    </citation>
    <scope>NUCLEOTIDE SEQUENCE [LARGE SCALE GENOMIC DNA]</scope>
    <source>
        <strain>2-40 / ATCC 43961 / DSM 17024</strain>
    </source>
</reference>
<keyword id="KW-0963">Cytoplasm</keyword>
<keyword id="KW-0342">GTP-binding</keyword>
<keyword id="KW-0378">Hydrolase</keyword>
<keyword id="KW-0460">Magnesium</keyword>
<keyword id="KW-0479">Metal-binding</keyword>
<keyword id="KW-0547">Nucleotide-binding</keyword>
<keyword id="KW-0630">Potassium</keyword>
<keyword id="KW-1185">Reference proteome</keyword>
<keyword id="KW-0819">tRNA processing</keyword>
<gene>
    <name evidence="1" type="primary">mnmE</name>
    <name evidence="1" type="synonym">trmE</name>
    <name type="ordered locus">Sde_4013</name>
</gene>
<organism>
    <name type="scientific">Saccharophagus degradans (strain 2-40 / ATCC 43961 / DSM 17024)</name>
    <dbReference type="NCBI Taxonomy" id="203122"/>
    <lineage>
        <taxon>Bacteria</taxon>
        <taxon>Pseudomonadati</taxon>
        <taxon>Pseudomonadota</taxon>
        <taxon>Gammaproteobacteria</taxon>
        <taxon>Cellvibrionales</taxon>
        <taxon>Cellvibrionaceae</taxon>
        <taxon>Saccharophagus</taxon>
    </lineage>
</organism>
<sequence>MTTQTNETIAAIATAPGRGGVGIIRVSGPKALPIAQHILGITPKPRYAHYGDFCNANGDILDQGIALYFPNPHSFTGEDVLELQGHGGPVILDMLLDAVVQAGARLARPGEFSERAFLNDKLDLAQAEAIADLIEASSQQAAKQALNSLKGEFSNKIHELVEQLIHLRMYVESAIDFPEEEIDFLSDGIVEGKLNDVIDQTDAVLAQAQQGALLRDGMKVVIAGRPNAGKSSLLNALAEKDIAIVTNIAGTTRDVLREHIHIDGMPLHIIDTAGLRDSPDHVEQIGIERAWGEIESADRILLLIDTTDNSQLDVNVHWPEFTSNAAYAKKLTVIYNKIDESGFSTTNHTSDAPYQTLPLSAKTGAGLDTLKAHLKSVMGFQSTTEGGFSARRRHIHAIEQAQNYLLTGREQLQLHTAGELLAEDLRAAQNHLSEITGAFTPDDLLGKIFSSFCIGK</sequence>
<feature type="chain" id="PRO_1000048869" description="tRNA modification GTPase MnmE">
    <location>
        <begin position="1"/>
        <end position="456"/>
    </location>
</feature>
<feature type="domain" description="TrmE-type G">
    <location>
        <begin position="217"/>
        <end position="379"/>
    </location>
</feature>
<feature type="binding site" evidence="1">
    <location>
        <position position="25"/>
    </location>
    <ligand>
        <name>(6S)-5-formyl-5,6,7,8-tetrahydrofolate</name>
        <dbReference type="ChEBI" id="CHEBI:57457"/>
    </ligand>
</feature>
<feature type="binding site" evidence="1">
    <location>
        <position position="82"/>
    </location>
    <ligand>
        <name>(6S)-5-formyl-5,6,7,8-tetrahydrofolate</name>
        <dbReference type="ChEBI" id="CHEBI:57457"/>
    </ligand>
</feature>
<feature type="binding site" evidence="1">
    <location>
        <position position="121"/>
    </location>
    <ligand>
        <name>(6S)-5-formyl-5,6,7,8-tetrahydrofolate</name>
        <dbReference type="ChEBI" id="CHEBI:57457"/>
    </ligand>
</feature>
<feature type="binding site" evidence="1">
    <location>
        <begin position="227"/>
        <end position="232"/>
    </location>
    <ligand>
        <name>GTP</name>
        <dbReference type="ChEBI" id="CHEBI:37565"/>
    </ligand>
</feature>
<feature type="binding site" evidence="1">
    <location>
        <position position="227"/>
    </location>
    <ligand>
        <name>K(+)</name>
        <dbReference type="ChEBI" id="CHEBI:29103"/>
    </ligand>
</feature>
<feature type="binding site" evidence="1">
    <location>
        <position position="231"/>
    </location>
    <ligand>
        <name>Mg(2+)</name>
        <dbReference type="ChEBI" id="CHEBI:18420"/>
    </ligand>
</feature>
<feature type="binding site" evidence="1">
    <location>
        <begin position="246"/>
        <end position="252"/>
    </location>
    <ligand>
        <name>GTP</name>
        <dbReference type="ChEBI" id="CHEBI:37565"/>
    </ligand>
</feature>
<feature type="binding site" evidence="1">
    <location>
        <position position="246"/>
    </location>
    <ligand>
        <name>K(+)</name>
        <dbReference type="ChEBI" id="CHEBI:29103"/>
    </ligand>
</feature>
<feature type="binding site" evidence="1">
    <location>
        <position position="248"/>
    </location>
    <ligand>
        <name>K(+)</name>
        <dbReference type="ChEBI" id="CHEBI:29103"/>
    </ligand>
</feature>
<feature type="binding site" evidence="1">
    <location>
        <position position="251"/>
    </location>
    <ligand>
        <name>K(+)</name>
        <dbReference type="ChEBI" id="CHEBI:29103"/>
    </ligand>
</feature>
<feature type="binding site" evidence="1">
    <location>
        <position position="252"/>
    </location>
    <ligand>
        <name>Mg(2+)</name>
        <dbReference type="ChEBI" id="CHEBI:18420"/>
    </ligand>
</feature>
<feature type="binding site" evidence="1">
    <location>
        <begin position="271"/>
        <end position="274"/>
    </location>
    <ligand>
        <name>GTP</name>
        <dbReference type="ChEBI" id="CHEBI:37565"/>
    </ligand>
</feature>
<feature type="binding site" evidence="1">
    <location>
        <position position="456"/>
    </location>
    <ligand>
        <name>(6S)-5-formyl-5,6,7,8-tetrahydrofolate</name>
        <dbReference type="ChEBI" id="CHEBI:57457"/>
    </ligand>
</feature>
<proteinExistence type="inferred from homology"/>
<comment type="function">
    <text evidence="1">Exhibits a very high intrinsic GTPase hydrolysis rate. Involved in the addition of a carboxymethylaminomethyl (cmnm) group at the wobble position (U34) of certain tRNAs, forming tRNA-cmnm(5)s(2)U34.</text>
</comment>
<comment type="cofactor">
    <cofactor evidence="1">
        <name>K(+)</name>
        <dbReference type="ChEBI" id="CHEBI:29103"/>
    </cofactor>
    <text evidence="1">Binds 1 potassium ion per subunit.</text>
</comment>
<comment type="subunit">
    <text evidence="1">Homodimer. Heterotetramer of two MnmE and two MnmG subunits.</text>
</comment>
<comment type="subcellular location">
    <subcellularLocation>
        <location evidence="1">Cytoplasm</location>
    </subcellularLocation>
</comment>
<comment type="similarity">
    <text evidence="1">Belongs to the TRAFAC class TrmE-Era-EngA-EngB-Septin-like GTPase superfamily. TrmE GTPase family.</text>
</comment>
<dbReference type="EC" id="3.6.-.-" evidence="1"/>
<dbReference type="EMBL" id="CP000282">
    <property type="protein sequence ID" value="ABD83268.1"/>
    <property type="molecule type" value="Genomic_DNA"/>
</dbReference>
<dbReference type="RefSeq" id="WP_011470483.1">
    <property type="nucleotide sequence ID" value="NC_007912.1"/>
</dbReference>
<dbReference type="SMR" id="Q21DG1"/>
<dbReference type="STRING" id="203122.Sde_4013"/>
<dbReference type="GeneID" id="98615604"/>
<dbReference type="KEGG" id="sde:Sde_4013"/>
<dbReference type="eggNOG" id="COG0486">
    <property type="taxonomic scope" value="Bacteria"/>
</dbReference>
<dbReference type="HOGENOM" id="CLU_019624_4_1_6"/>
<dbReference type="OrthoDB" id="9805918at2"/>
<dbReference type="Proteomes" id="UP000001947">
    <property type="component" value="Chromosome"/>
</dbReference>
<dbReference type="GO" id="GO:0005829">
    <property type="term" value="C:cytosol"/>
    <property type="evidence" value="ECO:0007669"/>
    <property type="project" value="TreeGrafter"/>
</dbReference>
<dbReference type="GO" id="GO:0005525">
    <property type="term" value="F:GTP binding"/>
    <property type="evidence" value="ECO:0007669"/>
    <property type="project" value="UniProtKB-UniRule"/>
</dbReference>
<dbReference type="GO" id="GO:0003924">
    <property type="term" value="F:GTPase activity"/>
    <property type="evidence" value="ECO:0007669"/>
    <property type="project" value="UniProtKB-UniRule"/>
</dbReference>
<dbReference type="GO" id="GO:0046872">
    <property type="term" value="F:metal ion binding"/>
    <property type="evidence" value="ECO:0007669"/>
    <property type="project" value="UniProtKB-KW"/>
</dbReference>
<dbReference type="GO" id="GO:0030488">
    <property type="term" value="P:tRNA methylation"/>
    <property type="evidence" value="ECO:0007669"/>
    <property type="project" value="TreeGrafter"/>
</dbReference>
<dbReference type="GO" id="GO:0002098">
    <property type="term" value="P:tRNA wobble uridine modification"/>
    <property type="evidence" value="ECO:0007669"/>
    <property type="project" value="TreeGrafter"/>
</dbReference>
<dbReference type="CDD" id="cd04164">
    <property type="entry name" value="trmE"/>
    <property type="match status" value="1"/>
</dbReference>
<dbReference type="CDD" id="cd14858">
    <property type="entry name" value="TrmE_N"/>
    <property type="match status" value="1"/>
</dbReference>
<dbReference type="FunFam" id="3.30.1360.120:FF:000001">
    <property type="entry name" value="tRNA modification GTPase MnmE"/>
    <property type="match status" value="1"/>
</dbReference>
<dbReference type="FunFam" id="3.40.50.300:FF:000249">
    <property type="entry name" value="tRNA modification GTPase MnmE"/>
    <property type="match status" value="1"/>
</dbReference>
<dbReference type="Gene3D" id="3.40.50.300">
    <property type="entry name" value="P-loop containing nucleotide triphosphate hydrolases"/>
    <property type="match status" value="1"/>
</dbReference>
<dbReference type="Gene3D" id="3.30.1360.120">
    <property type="entry name" value="Probable tRNA modification gtpase trme, domain 1"/>
    <property type="match status" value="1"/>
</dbReference>
<dbReference type="Gene3D" id="1.20.120.430">
    <property type="entry name" value="tRNA modification GTPase MnmE domain 2"/>
    <property type="match status" value="1"/>
</dbReference>
<dbReference type="HAMAP" id="MF_00379">
    <property type="entry name" value="GTPase_MnmE"/>
    <property type="match status" value="1"/>
</dbReference>
<dbReference type="InterPro" id="IPR031168">
    <property type="entry name" value="G_TrmE"/>
</dbReference>
<dbReference type="InterPro" id="IPR006073">
    <property type="entry name" value="GTP-bd"/>
</dbReference>
<dbReference type="InterPro" id="IPR018948">
    <property type="entry name" value="GTP-bd_TrmE_N"/>
</dbReference>
<dbReference type="InterPro" id="IPR004520">
    <property type="entry name" value="GTPase_MnmE"/>
</dbReference>
<dbReference type="InterPro" id="IPR027368">
    <property type="entry name" value="MnmE_dom2"/>
</dbReference>
<dbReference type="InterPro" id="IPR025867">
    <property type="entry name" value="MnmE_helical"/>
</dbReference>
<dbReference type="InterPro" id="IPR027417">
    <property type="entry name" value="P-loop_NTPase"/>
</dbReference>
<dbReference type="InterPro" id="IPR005225">
    <property type="entry name" value="Small_GTP-bd"/>
</dbReference>
<dbReference type="InterPro" id="IPR027266">
    <property type="entry name" value="TrmE/GcvT_dom1"/>
</dbReference>
<dbReference type="NCBIfam" id="TIGR00450">
    <property type="entry name" value="mnmE_trmE_thdF"/>
    <property type="match status" value="1"/>
</dbReference>
<dbReference type="NCBIfam" id="NF003661">
    <property type="entry name" value="PRK05291.1-3"/>
    <property type="match status" value="1"/>
</dbReference>
<dbReference type="NCBIfam" id="TIGR00231">
    <property type="entry name" value="small_GTP"/>
    <property type="match status" value="1"/>
</dbReference>
<dbReference type="PANTHER" id="PTHR42714">
    <property type="entry name" value="TRNA MODIFICATION GTPASE GTPBP3"/>
    <property type="match status" value="1"/>
</dbReference>
<dbReference type="PANTHER" id="PTHR42714:SF2">
    <property type="entry name" value="TRNA MODIFICATION GTPASE GTPBP3, MITOCHONDRIAL"/>
    <property type="match status" value="1"/>
</dbReference>
<dbReference type="Pfam" id="PF01926">
    <property type="entry name" value="MMR_HSR1"/>
    <property type="match status" value="1"/>
</dbReference>
<dbReference type="Pfam" id="PF12631">
    <property type="entry name" value="MnmE_helical"/>
    <property type="match status" value="1"/>
</dbReference>
<dbReference type="Pfam" id="PF10396">
    <property type="entry name" value="TrmE_N"/>
    <property type="match status" value="1"/>
</dbReference>
<dbReference type="SUPFAM" id="SSF52540">
    <property type="entry name" value="P-loop containing nucleoside triphosphate hydrolases"/>
    <property type="match status" value="1"/>
</dbReference>
<dbReference type="SUPFAM" id="SSF116878">
    <property type="entry name" value="TrmE connector domain"/>
    <property type="match status" value="1"/>
</dbReference>
<dbReference type="PROSITE" id="PS51709">
    <property type="entry name" value="G_TRME"/>
    <property type="match status" value="1"/>
</dbReference>